<keyword id="KW-0903">Direct protein sequencing</keyword>
<keyword id="KW-1015">Disulfide bond</keyword>
<keyword id="KW-0255">Endonuclease</keyword>
<keyword id="KW-0325">Glycoprotein</keyword>
<keyword id="KW-0378">Hydrolase</keyword>
<keyword id="KW-0540">Nuclease</keyword>
<keyword id="KW-0964">Secreted</keyword>
<comment type="function">
    <text evidence="3">Endonuclease, hydrolyzes highly polymerized RNA, poly(U) and poly(C), and the dinucleotides CpA and UpA. More active towards rCA than rUA or rUG. Has cytotoxic activity against cultured human submaxillary gland carcinoma cells.</text>
</comment>
<comment type="subunit">
    <text evidence="3">Monomer.</text>
</comment>
<comment type="subcellular location">
    <subcellularLocation>
        <location evidence="4">Secreted</location>
    </subcellularLocation>
</comment>
<comment type="PTM">
    <text evidence="3">There are at least five different forms arising from glycan heterogeneity.</text>
</comment>
<comment type="mass spectrometry" mass="13993.0" error="1.0" method="Electrospray" evidence="3">
    <text>Major (most represented) glycoform 1.</text>
</comment>
<comment type="mass spectrometry" mass="14358.0" error="1.0" method="Electrospray" evidence="3">
    <text>Minor glycoform 2.</text>
</comment>
<comment type="mass spectrometry" mass="14155.0" error="1.0" method="Electrospray" evidence="3">
    <text>Minor glycoform 3.</text>
</comment>
<comment type="mass spectrometry" mass="14520.0" error="1.0" method="Electrospray" evidence="3">
    <text>Minor glycoform 4.</text>
</comment>
<comment type="mass spectrometry" mass="13790.0" error="1.0" method="Electrospray" evidence="3">
    <text>Minor glycoform 5.</text>
</comment>
<comment type="similarity">
    <text evidence="2">Belongs to the pancreatic ribonuclease family.</text>
</comment>
<name>AMPS3_LITPI</name>
<protein>
    <recommendedName>
        <fullName>Amphinase-3</fullName>
        <ecNumber>3.1.27.-</ecNumber>
    </recommendedName>
</protein>
<feature type="chain" id="PRO_0000291309" description="Amphinase-3">
    <location>
        <begin position="1"/>
        <end position="114"/>
    </location>
</feature>
<feature type="active site" description="Proton acceptor" evidence="1">
    <location>
        <position position="15"/>
    </location>
</feature>
<feature type="active site" description="Proton donor" evidence="1">
    <location>
        <position position="107"/>
    </location>
</feature>
<feature type="binding site" evidence="1">
    <location>
        <begin position="42"/>
        <end position="46"/>
    </location>
    <ligand>
        <name>substrate</name>
    </ligand>
</feature>
<feature type="glycosylation site" description="N-linked (GlcNAc...) asparagine" evidence="2">
    <location>
        <position position="25"/>
    </location>
</feature>
<feature type="glycosylation site" description="N-linked (GlcNAc...) asparagine" evidence="2">
    <location>
        <position position="67"/>
    </location>
</feature>
<feature type="glycosylation site" description="N-linked (GlcNAc...) asparagine" evidence="2">
    <location>
        <position position="91"/>
    </location>
</feature>
<feature type="disulfide bond" evidence="1">
    <location>
        <begin position="26"/>
        <end position="79"/>
    </location>
</feature>
<feature type="disulfide bond" evidence="1">
    <location>
        <begin position="41"/>
        <end position="85"/>
    </location>
</feature>
<feature type="disulfide bond" evidence="1">
    <location>
        <begin position="59"/>
        <end position="100"/>
    </location>
</feature>
<feature type="disulfide bond" evidence="1">
    <location>
        <begin position="97"/>
        <end position="114"/>
    </location>
</feature>
<evidence type="ECO:0000250" key="1">
    <source>
        <dbReference type="UniProtKB" id="P11916"/>
    </source>
</evidence>
<evidence type="ECO:0000255" key="2"/>
<evidence type="ECO:0000269" key="3">
    <source>
    </source>
</evidence>
<evidence type="ECO:0000305" key="4"/>
<dbReference type="EC" id="3.1.27.-"/>
<dbReference type="SMR" id="P85074"/>
<dbReference type="GO" id="GO:0005576">
    <property type="term" value="C:extracellular region"/>
    <property type="evidence" value="ECO:0007669"/>
    <property type="project" value="UniProtKB-SubCell"/>
</dbReference>
<dbReference type="GO" id="GO:0004519">
    <property type="term" value="F:endonuclease activity"/>
    <property type="evidence" value="ECO:0007669"/>
    <property type="project" value="UniProtKB-KW"/>
</dbReference>
<dbReference type="GO" id="GO:0003676">
    <property type="term" value="F:nucleic acid binding"/>
    <property type="evidence" value="ECO:0007669"/>
    <property type="project" value="InterPro"/>
</dbReference>
<dbReference type="GO" id="GO:0004540">
    <property type="term" value="F:RNA nuclease activity"/>
    <property type="evidence" value="ECO:0007669"/>
    <property type="project" value="TreeGrafter"/>
</dbReference>
<dbReference type="GO" id="GO:0050830">
    <property type="term" value="P:defense response to Gram-positive bacterium"/>
    <property type="evidence" value="ECO:0007669"/>
    <property type="project" value="TreeGrafter"/>
</dbReference>
<dbReference type="CDD" id="cd06265">
    <property type="entry name" value="RNase_A_canonical"/>
    <property type="match status" value="1"/>
</dbReference>
<dbReference type="Gene3D" id="3.10.130.10">
    <property type="entry name" value="Ribonuclease A-like domain"/>
    <property type="match status" value="1"/>
</dbReference>
<dbReference type="InterPro" id="IPR001427">
    <property type="entry name" value="RNaseA"/>
</dbReference>
<dbReference type="InterPro" id="IPR036816">
    <property type="entry name" value="RNaseA-like_dom_sf"/>
</dbReference>
<dbReference type="InterPro" id="IPR023411">
    <property type="entry name" value="RNaseA_AS"/>
</dbReference>
<dbReference type="InterPro" id="IPR023412">
    <property type="entry name" value="RNaseA_domain"/>
</dbReference>
<dbReference type="PANTHER" id="PTHR11437">
    <property type="entry name" value="RIBONUCLEASE"/>
    <property type="match status" value="1"/>
</dbReference>
<dbReference type="Pfam" id="PF00074">
    <property type="entry name" value="RnaseA"/>
    <property type="match status" value="1"/>
</dbReference>
<dbReference type="SMART" id="SM00092">
    <property type="entry name" value="RNAse_Pc"/>
    <property type="match status" value="1"/>
</dbReference>
<dbReference type="SUPFAM" id="SSF54076">
    <property type="entry name" value="RNase A-like"/>
    <property type="match status" value="1"/>
</dbReference>
<dbReference type="PROSITE" id="PS00127">
    <property type="entry name" value="RNASE_PANCREATIC"/>
    <property type="match status" value="1"/>
</dbReference>
<accession>P85074</accession>
<sequence length="114" mass="13066">KPKEDKEWEKFKVKHITSQSVADFNCTSTMNNPDFTPDGQCKPINTFIHSNTGPVKEICRRASGRVNKSSTQQFPLTTCKNPKRCKYSQSNETNYICITCRDNYPVHFVKIGKC</sequence>
<proteinExistence type="evidence at protein level"/>
<reference key="1">
    <citation type="journal article" date="2007" name="J. Mol. Biol.">
        <title>Enzymatic and structural characterisation of amphinase, a novel cytotoxic ribonuclease from Rana pipiens oocytes.</title>
        <authorList>
            <person name="Singh U.P."/>
            <person name="Ardelt W."/>
            <person name="Saxena S.K."/>
            <person name="Holloway D.E."/>
            <person name="Vidunas E."/>
            <person name="Lee H.-S."/>
            <person name="Saxena A."/>
            <person name="Shogen K."/>
            <person name="Acharya K.R."/>
        </authorList>
    </citation>
    <scope>PROTEIN SEQUENCE</scope>
    <scope>FUNCTION</scope>
    <scope>SUBUNIT</scope>
    <scope>MASS SPECTROMETRY</scope>
    <source>
        <tissue>Oocyte</tissue>
    </source>
</reference>
<organism>
    <name type="scientific">Lithobates pipiens</name>
    <name type="common">Northern leopard frog</name>
    <name type="synonym">Rana pipiens</name>
    <dbReference type="NCBI Taxonomy" id="8404"/>
    <lineage>
        <taxon>Eukaryota</taxon>
        <taxon>Metazoa</taxon>
        <taxon>Chordata</taxon>
        <taxon>Craniata</taxon>
        <taxon>Vertebrata</taxon>
        <taxon>Euteleostomi</taxon>
        <taxon>Amphibia</taxon>
        <taxon>Batrachia</taxon>
        <taxon>Anura</taxon>
        <taxon>Neobatrachia</taxon>
        <taxon>Ranoidea</taxon>
        <taxon>Ranidae</taxon>
        <taxon>Lithobates</taxon>
    </lineage>
</organism>